<proteinExistence type="evidence at protein level"/>
<reference key="1">
    <citation type="journal article" date="1992" name="Biochem. Biophys. Res. Commun.">
        <title>Cloning, sequencing, and expression of human gonadotropin releasing hormone (GnRH) receptor.</title>
        <authorList>
            <person name="Kakar S.S."/>
            <person name="Musgrove L.C."/>
            <person name="Devor D.C."/>
            <person name="Sellers J.C."/>
            <person name="Neill J.D."/>
        </authorList>
    </citation>
    <scope>NUCLEOTIDE SEQUENCE [MRNA] (ISOFORM 1)</scope>
    <source>
        <tissue>Pituitary</tissue>
    </source>
</reference>
<reference key="2">
    <citation type="journal article" date="1993" name="Mol. Cell. Endocrinol.">
        <title>Cloning and characterization of the human GnRH receptor.</title>
        <authorList>
            <person name="Chi L."/>
            <person name="Zhou W."/>
            <person name="Prikhozhan A."/>
            <person name="Flanagan C.A."/>
            <person name="Davidson J.S."/>
            <person name="Golembo M."/>
            <person name="Illing N."/>
            <person name="Millar R.P."/>
            <person name="Sealfon S.C."/>
        </authorList>
    </citation>
    <scope>NUCLEOTIDE SEQUENCE [MRNA] (ISOFORM 1)</scope>
    <source>
        <tissue>Pituitary</tissue>
    </source>
</reference>
<reference key="3">
    <citation type="journal article" date="1994" name="Mol. Cell. Endocrinol.">
        <title>The nucleotide sequences of human GnRH receptors in breast and ovarian tumors are identical with that found in pituitary.</title>
        <authorList>
            <person name="Kakar S.S."/>
            <person name="Grizzle W.E."/>
            <person name="Neill J.D."/>
        </authorList>
    </citation>
    <scope>NUCLEOTIDE SEQUENCE [MRNA] (ISOFORM 1)</scope>
</reference>
<reference key="4">
    <citation type="journal article" date="1997" name="Eur. J. Endocrinol.">
        <title>Molecular structure of the human gonadotropin-releasing hormone receptor gene.</title>
        <authorList>
            <person name="Kakar S.S."/>
        </authorList>
    </citation>
    <scope>NUCLEOTIDE SEQUENCE [GENOMIC DNA] (ISOFORM 1)</scope>
</reference>
<reference key="5">
    <citation type="journal article" date="1997" name="Mol. Endocrinol.">
        <title>Inhibition of gonadotropin-releasing hormone receptor signaling by expression of a splice variant of the human receptor.</title>
        <authorList>
            <person name="Grosse R."/>
            <person name="Schoneberg T."/>
            <person name="Schultz G."/>
            <person name="Gudermann T."/>
        </authorList>
    </citation>
    <scope>NUCLEOTIDE SEQUENCE [MRNA] (ISOFORM 2)</scope>
    <source>
        <tissue>Pituitary</tissue>
    </source>
</reference>
<reference key="6">
    <citation type="submission" date="2003-09" db="EMBL/GenBank/DDBJ databases">
        <title>cDNA clones of human proteins involved in signal transduction sequenced by the Guthrie cDNA resource center (www.cdna.org).</title>
        <authorList>
            <person name="Kopatz S.A."/>
            <person name="Aronstam R.S."/>
            <person name="Sharma S.V."/>
        </authorList>
    </citation>
    <scope>NUCLEOTIDE SEQUENCE [LARGE SCALE MRNA] (ISOFORM 1)</scope>
    <source>
        <tissue>Testis</tissue>
    </source>
</reference>
<reference key="7">
    <citation type="journal article" date="2004" name="Genome Res.">
        <title>The status, quality, and expansion of the NIH full-length cDNA project: the Mammalian Gene Collection (MGC).</title>
        <authorList>
            <consortium name="The MGC Project Team"/>
        </authorList>
    </citation>
    <scope>NUCLEOTIDE SEQUENCE [LARGE SCALE MRNA] (ISOFORM 1)</scope>
</reference>
<reference key="8">
    <citation type="journal article" date="1999" name="Eur. J. Endocrinol.">
        <title>Tissue-specific pattern of variant transcripts of the human gonadotropin-releasing hormone receptor gene.</title>
        <authorList>
            <person name="Kottler M.L."/>
            <person name="Bergametti F."/>
            <person name="Carre M.C."/>
            <person name="Morice S."/>
            <person name="Decoret E."/>
            <person name="Lagarde J.P."/>
            <person name="Starzec A."/>
            <person name="Counis R."/>
        </authorList>
    </citation>
    <scope>NUCLEOTIDE SEQUENCE [GENOMIC DNA] OF 247-328 (ISOFORM 1)</scope>
</reference>
<reference key="9">
    <citation type="journal article" date="1997" name="N. Engl. J. Med.">
        <title>A family with hypogonadotropic hypogonadism and mutations in the gonadotropin-releasing hormone receptor.</title>
        <authorList>
            <person name="de Roux N."/>
            <person name="Young J."/>
            <person name="Misrahi M."/>
            <person name="Genet R."/>
            <person name="Chanson P."/>
            <person name="Schaison G."/>
            <person name="Milgrom E."/>
        </authorList>
    </citation>
    <scope>VARIANTS HH7 ARG-106 AND GLN-262</scope>
    <scope>CHARACTERIZATION OF VARIANTS HH7 ARG-106 AND GLN-262</scope>
</reference>
<reference key="10">
    <citation type="journal article" date="1998" name="Nat. Genet.">
        <title>Mutations in gonadotropin-releasing hormone receptor gene cause hypogonadotropic hypogonadism.</title>
        <authorList>
            <person name="Layman L.C."/>
            <person name="Cohen D.P."/>
            <person name="Jin M."/>
            <person name="Xie J."/>
            <person name="Li Z."/>
            <person name="Reindollar R.H."/>
            <person name="Bolbolan S."/>
            <person name="Bick D.P."/>
            <person name="Sherins R.R."/>
            <person name="Duck L.W."/>
            <person name="Musgrove L.C."/>
            <person name="Sellers J.C."/>
            <person name="Neill J.D."/>
        </authorList>
    </citation>
    <scope>VARIANTS HH7 GLN-262 AND CYS-284</scope>
    <scope>CHARACTERIZATION OF VARIANTS HH7 GLN-262 AND CYS-284</scope>
</reference>
<reference key="11">
    <citation type="journal article" date="1999" name="J. Clin. Endocrinol. Metab.">
        <title>The same molecular defects of the gonadotropin-releasing hormone receptor determine a variable degree of hypogonadism in affected kindred.</title>
        <authorList>
            <person name="de Roux N."/>
            <person name="Young J."/>
            <person name="Brailly-Tabard S."/>
            <person name="Misrahi M."/>
            <person name="Milgrom E."/>
            <person name="Schaison G."/>
        </authorList>
    </citation>
    <scope>VARIANTS HH7 ARG-106; ARG-217 AND GLN-262</scope>
    <scope>CHARACTERIZATION OF VARIANTS HH7 ARG-106; ARG-217 AND GLN-262</scope>
</reference>
<reference key="12">
    <citation type="journal article" date="1999" name="J. Clin. Endocrinol. Metab.">
        <title>Resistance of hypogonadic patients with mutated GnRH receptor genes to pulsatile GnRH administration.</title>
        <authorList>
            <person name="Caron P."/>
            <person name="Chauvin S."/>
            <person name="Christin-Maitre S."/>
            <person name="Bennet A."/>
            <person name="Lahlou N."/>
            <person name="Counis R."/>
            <person name="Bouchard P."/>
            <person name="Kottler M.-L."/>
        </authorList>
    </citation>
    <scope>VARIANTS HH7 ASP-129 AND GLN-262</scope>
    <scope>CHARACTERIZATION OF VARIANT HH7 ASP-129</scope>
</reference>
<reference key="13">
    <citation type="journal article" date="1999" name="J. Clin. Endocrinol. Metab.">
        <title>Complete hypogonadotropic hypogonadism associated with a novel inactivating mutation of the gonadotropin-releasing hormone receptor.</title>
        <authorList>
            <person name="Pralong F.P."/>
            <person name="Gomez F."/>
            <person name="Castillo E."/>
            <person name="Cotecchia S."/>
            <person name="Abuin L."/>
            <person name="Aubert M.L."/>
            <person name="Portmann L."/>
            <person name="Gaillard R.C."/>
        </authorList>
    </citation>
    <scope>VARIANT HH7 ARG-168</scope>
    <scope>CHARACTERIZATION OF VARIANT HH7 ARG-168</scope>
</reference>
<reference key="14">
    <citation type="journal article" date="2001" name="J. Clin. Endocrinol. Metab.">
        <title>The fertile eunuch variant of idiopathic hypogonadotropic hypogonadism: spontaneous reversal associated with a homozygous mutation in the gonadotropin-releasing hormone receptor.</title>
        <authorList>
            <person name="Pitteloud N."/>
            <person name="Boepple P.A."/>
            <person name="DeCruz S."/>
            <person name="Valkenburgh S.B."/>
            <person name="Crowley W.F. Jr."/>
            <person name="Hayes F.J."/>
        </authorList>
    </citation>
    <scope>VARIANT HH7 ARG-106</scope>
</reference>
<reference key="15">
    <citation type="journal article" date="2001" name="Clin. Endocrinol. (Oxf.)">
        <title>A novel homozygous mutation in the second transmembrane domain of the gonadotrophin releasing hormone receptor gene.</title>
        <authorList>
            <person name="Soederlund D."/>
            <person name="Canto P."/>
            <person name="de la Chesnaye E."/>
            <person name="Ulloa-Aguirre A."/>
            <person name="Mendez J.P."/>
        </authorList>
    </citation>
    <scope>VARIANT HH7 LYS-90</scope>
</reference>
<reference key="16">
    <citation type="journal article" date="2001" name="J. Clin. Endocrinol. Metab.">
        <title>Two novel mutations in the gonadotropin-releasing hormone receptor gene in Brazilian patients with hypogonadotropic hypogonadism and normal olfaction.</title>
        <authorList>
            <person name="Costa E.M.F."/>
            <person name="Bedecarrats G.Y."/>
            <person name="Mendonca B.B."/>
            <person name="Arnhold I.J.P."/>
            <person name="Kaiser U.B."/>
            <person name="Latronico A.C."/>
        </authorList>
    </citation>
    <scope>VARIANTS HH7 LYS-10; ARG-106 AND HIS-139</scope>
    <scope>CHARACTERIZATION OF VARIANTS HH7 LYS-10; ARG-106 AND HIS-139</scope>
</reference>
<reference key="17">
    <citation type="journal article" date="2002" name="J. Clin. Endocrinol. Metab.">
        <title>Molecular basis of hypogonadotropic hypogonadism: restoration of mutant (E(90)K) GnRH receptor function by a deletion at a distant site.</title>
        <authorList>
            <person name="Maya-Nunez G."/>
            <person name="Janovick J.A."/>
            <person name="Ulloa-Aguirre A."/>
            <person name="Soederlund D."/>
            <person name="Conn P.M."/>
            <person name="Mendez J.P."/>
        </authorList>
    </citation>
    <scope>CHARACTERIZATION OF VARIANT HH7 LYS-90</scope>
</reference>
<reference key="18">
    <citation type="journal article" date="2003" name="J. Clin. Endocrinol. Metab.">
        <title>Mutation Ala(171)Thr stabilizes the gonadotropin-releasing hormone receptor in its inactive conformation, causing familial hypogonadotropic hypogonadism.</title>
        <authorList>
            <person name="Karges B."/>
            <person name="Karges W."/>
            <person name="Mine M."/>
            <person name="Ludwig L."/>
            <person name="Kuehne R."/>
            <person name="Milgrom E."/>
            <person name="de Roux N."/>
        </authorList>
    </citation>
    <scope>VARIANT HH7 THR-171</scope>
    <scope>CHARACTERIZATION OF VARIANT HH7 THR-171</scope>
</reference>
<reference key="19">
    <citation type="journal article" date="2013" name="Am. J. Hum. Genet.">
        <title>Mutations in FGF17, IL17RD, DUSP6, SPRY4, and FLRT3 are identified in individuals with congenital hypogonadotropic hypogonadism.</title>
        <authorList>
            <person name="Miraoui H."/>
            <person name="Dwyer A.A."/>
            <person name="Sykiotis G.P."/>
            <person name="Plummer L."/>
            <person name="Chung W."/>
            <person name="Feng B."/>
            <person name="Beenken A."/>
            <person name="Clarke J."/>
            <person name="Pers T.H."/>
            <person name="Dworzynski P."/>
            <person name="Keefe K."/>
            <person name="Niedziela M."/>
            <person name="Raivio T."/>
            <person name="Crowley W.F. Jr."/>
            <person name="Seminara S.B."/>
            <person name="Quinton R."/>
            <person name="Hughes V.A."/>
            <person name="Kumanov P."/>
            <person name="Young J."/>
            <person name="Yialamas M.A."/>
            <person name="Hall J.E."/>
            <person name="Van Vliet G."/>
            <person name="Chanoine J.P."/>
            <person name="Rubenstein J."/>
            <person name="Mohammadi M."/>
            <person name="Tsai P.S."/>
            <person name="Sidis Y."/>
            <person name="Lage K."/>
            <person name="Pitteloud N."/>
        </authorList>
    </citation>
    <scope>VARIANTS HH7 VAL-83; ARG-106 AND GLN-262</scope>
</reference>
<reference key="20">
    <citation type="journal article" date="2014" name="J. Clin. Endocrinol. Metab.">
        <title>The prevalence of CHD7 missense versus truncating mutations is higher in patients with Kallmann syndrome than in typical CHARGE patients.</title>
        <authorList>
            <person name="Marcos S."/>
            <person name="Sarfati J."/>
            <person name="Leroy C."/>
            <person name="Fouveaut C."/>
            <person name="Parent P."/>
            <person name="Metz C."/>
            <person name="Wolczynski S."/>
            <person name="Gerard M."/>
            <person name="Bieth E."/>
            <person name="Kurtz F."/>
            <person name="Verier-Mine O."/>
            <person name="Perrin L."/>
            <person name="Archambeaud F."/>
            <person name="Cabrol S."/>
            <person name="Rodien P."/>
            <person name="Hove H."/>
            <person name="Prescott T."/>
            <person name="Lacombe D."/>
            <person name="Christin-Maitre S."/>
            <person name="Touraine P."/>
            <person name="Hieronimus S."/>
            <person name="Dewailly D."/>
            <person name="Young J."/>
            <person name="Pugeat M."/>
            <person name="Hardelin J.P."/>
            <person name="Dode C."/>
        </authorList>
    </citation>
    <scope>VARIANTS HH7 SER-18; SER-37; ASP-90; ARG-106; ASP-129; HIS-139; SER-146; GLN-262 AND ARG-266</scope>
</reference>
<dbReference type="EMBL" id="L03380">
    <property type="protein sequence ID" value="AAA35918.1"/>
    <property type="molecule type" value="mRNA"/>
</dbReference>
<dbReference type="EMBL" id="L07949">
    <property type="protein sequence ID" value="AAA35917.1"/>
    <property type="molecule type" value="mRNA"/>
</dbReference>
<dbReference type="EMBL" id="S60587">
    <property type="protein sequence ID" value="AAB26287.1"/>
    <property type="molecule type" value="mRNA"/>
</dbReference>
<dbReference type="EMBL" id="S77472">
    <property type="protein sequence ID" value="AAB33884.1"/>
    <property type="molecule type" value="mRNA"/>
</dbReference>
<dbReference type="EMBL" id="AF001952">
    <property type="protein sequence ID" value="AAB71348.1"/>
    <property type="molecule type" value="Genomic_DNA"/>
</dbReference>
<dbReference type="EMBL" id="AF001950">
    <property type="protein sequence ID" value="AAB71348.1"/>
    <property type="status" value="JOINED"/>
    <property type="molecule type" value="Genomic_DNA"/>
</dbReference>
<dbReference type="EMBL" id="AF001951">
    <property type="protein sequence ID" value="AAB71348.1"/>
    <property type="status" value="JOINED"/>
    <property type="molecule type" value="Genomic_DNA"/>
</dbReference>
<dbReference type="EMBL" id="Z81148">
    <property type="protein sequence ID" value="CAB03541.1"/>
    <property type="molecule type" value="mRNA"/>
</dbReference>
<dbReference type="EMBL" id="AY392011">
    <property type="protein sequence ID" value="AAR92228.1"/>
    <property type="molecule type" value="mRNA"/>
</dbReference>
<dbReference type="EMBL" id="BC113546">
    <property type="protein sequence ID" value="AAI13547.1"/>
    <property type="molecule type" value="mRNA"/>
</dbReference>
<dbReference type="EMBL" id="Z99995">
    <property type="protein sequence ID" value="CAB17082.1"/>
    <property type="molecule type" value="Genomic_DNA"/>
</dbReference>
<dbReference type="CCDS" id="CCDS3517.1">
    <molecule id="P30968-1"/>
</dbReference>
<dbReference type="CCDS" id="CCDS47064.1">
    <molecule id="P30968-2"/>
</dbReference>
<dbReference type="PIR" id="JC1353">
    <property type="entry name" value="JC1353"/>
</dbReference>
<dbReference type="RefSeq" id="NP_000397.1">
    <molecule id="P30968-1"/>
    <property type="nucleotide sequence ID" value="NM_000406.3"/>
</dbReference>
<dbReference type="RefSeq" id="NP_001012781.1">
    <molecule id="P30968-2"/>
    <property type="nucleotide sequence ID" value="NM_001012763.2"/>
</dbReference>
<dbReference type="PDB" id="7BR3">
    <property type="method" value="X-ray"/>
    <property type="resolution" value="2.79 A"/>
    <property type="chains" value="A=1-242, A=257-328"/>
</dbReference>
<dbReference type="PDBsum" id="7BR3"/>
<dbReference type="SMR" id="P30968"/>
<dbReference type="BioGRID" id="109060">
    <property type="interactions" value="6"/>
</dbReference>
<dbReference type="CORUM" id="P30968"/>
<dbReference type="FunCoup" id="P30968">
    <property type="interactions" value="691"/>
</dbReference>
<dbReference type="IntAct" id="P30968">
    <property type="interactions" value="4"/>
</dbReference>
<dbReference type="MINT" id="P30968"/>
<dbReference type="STRING" id="9606.ENSP00000226413"/>
<dbReference type="BindingDB" id="P30968"/>
<dbReference type="ChEMBL" id="CHEMBL1855"/>
<dbReference type="DrugBank" id="DB00106">
    <property type="generic name" value="Abarelix"/>
</dbReference>
<dbReference type="DrugBank" id="DB11906">
    <property type="generic name" value="Acyline"/>
</dbReference>
<dbReference type="DrugBank" id="DB06719">
    <property type="generic name" value="Buserelin"/>
</dbReference>
<dbReference type="DrugBank" id="DB00050">
    <property type="generic name" value="Cetrorelix"/>
</dbReference>
<dbReference type="DrugBank" id="DB01406">
    <property type="generic name" value="Danazol"/>
</dbReference>
<dbReference type="DrugBank" id="DB06699">
    <property type="generic name" value="Degarelix"/>
</dbReference>
<dbReference type="DrugBank" id="DB11979">
    <property type="generic name" value="Elagolix"/>
</dbReference>
<dbReference type="DrugBank" id="DB06785">
    <property type="generic name" value="Ganirelix"/>
</dbReference>
<dbReference type="DrugBank" id="DB11619">
    <property type="generic name" value="Gestrinone"/>
</dbReference>
<dbReference type="DrugBank" id="DB00644">
    <property type="generic name" value="Gonadorelin"/>
</dbReference>
<dbReference type="DrugBank" id="DB00014">
    <property type="generic name" value="Goserelin"/>
</dbReference>
<dbReference type="DrugBank" id="DB06788">
    <property type="generic name" value="Histrelin"/>
</dbReference>
<dbReference type="DrugBank" id="DB00007">
    <property type="generic name" value="Leuprolide"/>
</dbReference>
<dbReference type="DrugBank" id="DB17083">
    <property type="generic name" value="Linzagolix"/>
</dbReference>
<dbReference type="DrugBank" id="DB00666">
    <property type="generic name" value="Nafarelin"/>
</dbReference>
<dbReference type="DrugBank" id="DB12581">
    <property type="generic name" value="Ozarelix"/>
</dbReference>
<dbReference type="DrugBank" id="DB11853">
    <property type="generic name" value="Relugolix"/>
</dbReference>
<dbReference type="DrugBank" id="DB06494">
    <property type="generic name" value="Sufugolix"/>
</dbReference>
<dbReference type="DrugBank" id="DB05624">
    <property type="generic name" value="Teverelix"/>
</dbReference>
<dbReference type="DrugBank" id="DB06825">
    <property type="generic name" value="Triptorelin"/>
</dbReference>
<dbReference type="DrugBank" id="DB12755">
    <property type="generic name" value="Zoptarelin doxorubicin"/>
</dbReference>
<dbReference type="DrugCentral" id="P30968"/>
<dbReference type="GuidetoPHARMACOLOGY" id="256"/>
<dbReference type="TCDB" id="9.A.14.10.1">
    <property type="family name" value="the g-protein-coupled receptor (gpcr) family"/>
</dbReference>
<dbReference type="GlyCosmos" id="P30968">
    <property type="glycosylation" value="2 sites, No reported glycans"/>
</dbReference>
<dbReference type="GlyGen" id="P30968">
    <property type="glycosylation" value="2 sites"/>
</dbReference>
<dbReference type="PhosphoSitePlus" id="P30968"/>
<dbReference type="BioMuta" id="GNRHR"/>
<dbReference type="DMDM" id="399777"/>
<dbReference type="MassIVE" id="P30968"/>
<dbReference type="PaxDb" id="9606-ENSP00000226413"/>
<dbReference type="PeptideAtlas" id="P30968"/>
<dbReference type="ABCD" id="P30968">
    <property type="antibodies" value="2 sequenced antibodies"/>
</dbReference>
<dbReference type="Antibodypedia" id="12675">
    <property type="antibodies" value="439 antibodies from 35 providers"/>
</dbReference>
<dbReference type="DNASU" id="2798"/>
<dbReference type="Ensembl" id="ENST00000226413.5">
    <molecule id="P30968-1"/>
    <property type="protein sequence ID" value="ENSP00000226413.5"/>
    <property type="gene ID" value="ENSG00000109163.7"/>
</dbReference>
<dbReference type="Ensembl" id="ENST00000420975.2">
    <molecule id="P30968-2"/>
    <property type="protein sequence ID" value="ENSP00000397561.2"/>
    <property type="gene ID" value="ENSG00000109163.7"/>
</dbReference>
<dbReference type="GeneID" id="2798"/>
<dbReference type="KEGG" id="hsa:2798"/>
<dbReference type="MANE-Select" id="ENST00000226413.5">
    <property type="protein sequence ID" value="ENSP00000226413.5"/>
    <property type="RefSeq nucleotide sequence ID" value="NM_000406.3"/>
    <property type="RefSeq protein sequence ID" value="NP_000397.1"/>
</dbReference>
<dbReference type="UCSC" id="uc003hdm.4">
    <molecule id="P30968-1"/>
    <property type="organism name" value="human"/>
</dbReference>
<dbReference type="AGR" id="HGNC:4421"/>
<dbReference type="CTD" id="2798"/>
<dbReference type="DisGeNET" id="2798"/>
<dbReference type="GeneCards" id="GNRHR"/>
<dbReference type="GeneReviews" id="GNRHR"/>
<dbReference type="HGNC" id="HGNC:4421">
    <property type="gene designation" value="GNRHR"/>
</dbReference>
<dbReference type="HPA" id="ENSG00000109163">
    <property type="expression patterns" value="Tissue enriched (pituitary)"/>
</dbReference>
<dbReference type="MalaCards" id="GNRHR"/>
<dbReference type="MIM" id="138850">
    <property type="type" value="gene"/>
</dbReference>
<dbReference type="MIM" id="146110">
    <property type="type" value="phenotype"/>
</dbReference>
<dbReference type="neXtProt" id="NX_P30968"/>
<dbReference type="OpenTargets" id="ENSG00000109163"/>
<dbReference type="Orphanet" id="432">
    <property type="disease" value="Normosmic congenital hypogonadotropic hypogonadism"/>
</dbReference>
<dbReference type="PharmGKB" id="PA28800"/>
<dbReference type="VEuPathDB" id="HostDB:ENSG00000109163"/>
<dbReference type="eggNOG" id="KOG3656">
    <property type="taxonomic scope" value="Eukaryota"/>
</dbReference>
<dbReference type="GeneTree" id="ENSGT01130000278263"/>
<dbReference type="HOGENOM" id="CLU_009579_15_2_1"/>
<dbReference type="InParanoid" id="P30968"/>
<dbReference type="OMA" id="LHQDPHE"/>
<dbReference type="OrthoDB" id="6022667at2759"/>
<dbReference type="PAN-GO" id="P30968">
    <property type="GO annotations" value="4 GO annotations based on evolutionary models"/>
</dbReference>
<dbReference type="PhylomeDB" id="P30968"/>
<dbReference type="TreeFam" id="TF106499"/>
<dbReference type="PathwayCommons" id="P30968"/>
<dbReference type="Reactome" id="R-HSA-375281">
    <property type="pathway name" value="Hormone ligand-binding receptors"/>
</dbReference>
<dbReference type="Reactome" id="R-HSA-416476">
    <property type="pathway name" value="G alpha (q) signalling events"/>
</dbReference>
<dbReference type="SignaLink" id="P30968"/>
<dbReference type="SIGNOR" id="P30968"/>
<dbReference type="BioGRID-ORCS" id="2798">
    <property type="hits" value="9 hits in 1147 CRISPR screens"/>
</dbReference>
<dbReference type="GeneWiki" id="GNRHR"/>
<dbReference type="GenomeRNAi" id="2798"/>
<dbReference type="Pharos" id="P30968">
    <property type="development level" value="Tclin"/>
</dbReference>
<dbReference type="PRO" id="PR:P30968"/>
<dbReference type="Proteomes" id="UP000005640">
    <property type="component" value="Chromosome 4"/>
</dbReference>
<dbReference type="RNAct" id="P30968">
    <property type="molecule type" value="protein"/>
</dbReference>
<dbReference type="Bgee" id="ENSG00000109163">
    <property type="expression patterns" value="Expressed in adrenal tissue and 82 other cell types or tissues"/>
</dbReference>
<dbReference type="GO" id="GO:0016020">
    <property type="term" value="C:membrane"/>
    <property type="evidence" value="ECO:0000304"/>
    <property type="project" value="UniProtKB"/>
</dbReference>
<dbReference type="GO" id="GO:0005886">
    <property type="term" value="C:plasma membrane"/>
    <property type="evidence" value="ECO:0000318"/>
    <property type="project" value="GO_Central"/>
</dbReference>
<dbReference type="GO" id="GO:0004968">
    <property type="term" value="F:gonadotropin-releasing hormone receptor activity"/>
    <property type="evidence" value="ECO:0000314"/>
    <property type="project" value="ProtInc"/>
</dbReference>
<dbReference type="GO" id="GO:0032870">
    <property type="term" value="P:cellular response to hormone stimulus"/>
    <property type="evidence" value="ECO:0000318"/>
    <property type="project" value="GO_Central"/>
</dbReference>
<dbReference type="GO" id="GO:0007186">
    <property type="term" value="P:G protein-coupled receptor signaling pathway"/>
    <property type="evidence" value="ECO:0000318"/>
    <property type="project" value="GO_Central"/>
</dbReference>
<dbReference type="GO" id="GO:0032274">
    <property type="term" value="P:gonadotropin secretion"/>
    <property type="evidence" value="ECO:0000303"/>
    <property type="project" value="UniProtKB"/>
</dbReference>
<dbReference type="FunFam" id="1.20.1070.10:FF:000203">
    <property type="entry name" value="gonadotropin-releasing hormone receptor"/>
    <property type="match status" value="1"/>
</dbReference>
<dbReference type="Gene3D" id="1.20.1070.10">
    <property type="entry name" value="Rhodopsin 7-helix transmembrane proteins"/>
    <property type="match status" value="1"/>
</dbReference>
<dbReference type="InterPro" id="IPR000276">
    <property type="entry name" value="GPCR_Rhodpsn"/>
</dbReference>
<dbReference type="InterPro" id="IPR017452">
    <property type="entry name" value="GPCR_Rhodpsn_7TM"/>
</dbReference>
<dbReference type="InterPro" id="IPR001658">
    <property type="entry name" value="GphnRH_fam_rcpt"/>
</dbReference>
<dbReference type="PANTHER" id="PTHR24241:SF22">
    <property type="entry name" value="GONADOTROPIN-RELEASING HORMONE RECEPTOR"/>
    <property type="match status" value="1"/>
</dbReference>
<dbReference type="PANTHER" id="PTHR24241">
    <property type="entry name" value="NEUROPEPTIDE RECEPTOR-RELATED G-PROTEIN COUPLED RECEPTOR"/>
    <property type="match status" value="1"/>
</dbReference>
<dbReference type="Pfam" id="PF00001">
    <property type="entry name" value="7tm_1"/>
    <property type="match status" value="1"/>
</dbReference>
<dbReference type="PRINTS" id="PR00529">
    <property type="entry name" value="GNADOTRPHINR"/>
</dbReference>
<dbReference type="PRINTS" id="PR00237">
    <property type="entry name" value="GPCRRHODOPSN"/>
</dbReference>
<dbReference type="SUPFAM" id="SSF81321">
    <property type="entry name" value="Family A G protein-coupled receptor-like"/>
    <property type="match status" value="1"/>
</dbReference>
<dbReference type="PROSITE" id="PS00237">
    <property type="entry name" value="G_PROTEIN_RECEP_F1_1"/>
    <property type="match status" value="1"/>
</dbReference>
<dbReference type="PROSITE" id="PS50262">
    <property type="entry name" value="G_PROTEIN_RECEP_F1_2"/>
    <property type="match status" value="1"/>
</dbReference>
<comment type="function">
    <text>Receptor for gonadotropin releasing hormone (GnRH) that mediates the action of GnRH to stimulate the secretion of the gonadotropic hormones luteinizing hormone (LH) and follicle-stimulating hormone (FSH). This receptor mediates its action by association with G-proteins that activate a phosphatidylinositol-calcium second messenger system. Isoform 2 may act as an inhibitor of GnRH-R signaling.</text>
</comment>
<comment type="subcellular location">
    <subcellularLocation>
        <location>Cell membrane</location>
        <topology>Multi-pass membrane protein</topology>
    </subcellularLocation>
</comment>
<comment type="alternative products">
    <event type="alternative splicing"/>
    <isoform>
        <id>P30968-1</id>
        <name>1</name>
        <sequence type="displayed"/>
    </isoform>
    <isoform>
        <id>P30968-2</id>
        <name>2</name>
        <name>Truncated</name>
        <sequence type="described" ref="VSP_001914"/>
    </isoform>
</comment>
<comment type="tissue specificity">
    <text>Pituitary, ovary, testis, breast and prostate but not in liver and spleen.</text>
</comment>
<comment type="disease" evidence="3 4 5 6 7 8 9 10 11 12 13 14">
    <disease id="DI-00595">
        <name>Hypogonadotropic hypogonadism 7 with or without anosmia</name>
        <acronym>HH7</acronym>
        <description>A disorder characterized by absent or incomplete sexual maturation by the age of 18 years, in conjunction with low levels of circulating gonadotropins and testosterone and no other abnormalities of the hypothalamic-pituitary axis. In some cases, it is associated with non-reproductive phenotypes, such as anosmia, cleft palate, and sensorineural hearing loss. Anosmia or hyposmia is related to the absence or hypoplasia of the olfactory bulbs and tracts. Hypogonadism is due to deficiency in gonadotropin-releasing hormone and probably results from a failure of embryonic migration of gonadotropin-releasing hormone-synthesizing neurons. In the presence of anosmia, idiopathic hypogonadotropic hypogonadism is referred to as Kallmann syndrome, whereas in the presence of a normal sense of smell, it has been termed normosmic idiopathic hypogonadotropic hypogonadism (nIHH).</description>
        <dbReference type="MIM" id="146110"/>
    </disease>
    <text evidence="11">The disease is caused by variants affecting distinct genetic loci, including the gene represented in this entry. The genetics of hypogonadotropic hypogonadism involves various modes of transmission. Oligogenic inheritance has been reported in some patients carrying mutations in GNRHR as well as in other HH-associated genes including FGFR1 (PubMed:23643382).</text>
</comment>
<comment type="similarity">
    <text evidence="2">Belongs to the G-protein coupled receptor 1 family.</text>
</comment>
<name>GNRHR_HUMAN</name>
<sequence>MANSASPEQNQNHCSAINNSIPLMQGNLPTLTLSGKIRVTVTFFLFLLSATFNASFLLKLQKWTQKKEKGKKLSRMKLLLKHLTLANLLETLIVMPLDGMWNITVQWYAGELLCKVLSYLKLFSMYAPAFMMVVISLDRSLAITRPLALKSNSKVGQSMVGLAWILSSVFAGPQLYIFRMIHLADSSGQTKVFSQCVTHCSFSQWWHQAFYNFFTFSCLFIIPLFIMLICNAKIIFTLTRVLHQDPHELQLNQSKNNIPRARLKTLKMTVAFATSFTVCWTPYYVLGIWYWFDPEMLNRLSDPVNHFFFLFAFLNPCFDPLIYGYFSL</sequence>
<accession>P30968</accession>
<accession>O75793</accession>
<accession>Q14D13</accession>
<accession>Q92644</accession>
<feature type="chain" id="PRO_0000069487" description="Gonadotropin-releasing hormone receptor">
    <location>
        <begin position="1"/>
        <end position="328"/>
    </location>
</feature>
<feature type="topological domain" description="Extracellular" evidence="1">
    <location>
        <begin position="1"/>
        <end position="38"/>
    </location>
</feature>
<feature type="transmembrane region" description="Helical; Name=1" evidence="1">
    <location>
        <begin position="39"/>
        <end position="58"/>
    </location>
</feature>
<feature type="topological domain" description="Cytoplasmic" evidence="1">
    <location>
        <begin position="59"/>
        <end position="77"/>
    </location>
</feature>
<feature type="transmembrane region" description="Helical; Name=2" evidence="1">
    <location>
        <begin position="78"/>
        <end position="97"/>
    </location>
</feature>
<feature type="topological domain" description="Extracellular" evidence="1">
    <location>
        <begin position="98"/>
        <end position="115"/>
    </location>
</feature>
<feature type="transmembrane region" description="Helical; Name=3" evidence="1">
    <location>
        <begin position="116"/>
        <end position="137"/>
    </location>
</feature>
<feature type="topological domain" description="Cytoplasmic" evidence="1">
    <location>
        <begin position="138"/>
        <end position="164"/>
    </location>
</feature>
<feature type="transmembrane region" description="Helical; Name=4" evidence="1">
    <location>
        <begin position="165"/>
        <end position="184"/>
    </location>
</feature>
<feature type="topological domain" description="Extracellular" evidence="1">
    <location>
        <begin position="185"/>
        <end position="212"/>
    </location>
</feature>
<feature type="transmembrane region" description="Helical; Name=5" evidence="1">
    <location>
        <begin position="213"/>
        <end position="232"/>
    </location>
</feature>
<feature type="topological domain" description="Cytoplasmic" evidence="1">
    <location>
        <begin position="233"/>
        <end position="281"/>
    </location>
</feature>
<feature type="transmembrane region" description="Helical; Name=6" evidence="1">
    <location>
        <begin position="282"/>
        <end position="300"/>
    </location>
</feature>
<feature type="topological domain" description="Extracellular" evidence="1">
    <location>
        <begin position="301"/>
        <end position="306"/>
    </location>
</feature>
<feature type="transmembrane region" description="Helical; Name=7" evidence="1">
    <location>
        <begin position="307"/>
        <end position="326"/>
    </location>
</feature>
<feature type="topological domain" description="Cytoplasmic" evidence="1">
    <location>
        <begin position="327"/>
        <end position="328"/>
    </location>
</feature>
<feature type="glycosylation site" description="N-linked (GlcNAc...) asparagine" evidence="1">
    <location>
        <position position="18"/>
    </location>
</feature>
<feature type="glycosylation site" description="N-linked (GlcNAc...) asparagine" evidence="1">
    <location>
        <position position="102"/>
    </location>
</feature>
<feature type="disulfide bond" evidence="2">
    <location>
        <begin position="114"/>
        <end position="196"/>
    </location>
</feature>
<feature type="splice variant" id="VSP_001914" description="In isoform 2." evidence="15">
    <original>YIFRMIHLADSSGQTKVFSQCVTHCSFSQWWHQAFYNFFTFSCLFIIPLFIMLICNAKIIFTLTRVLHQDPHELQLNQSKNNIPRARLKTLKMTVAFATSFTVCWTPYYVLGIWYWFDPEMLNRLSDPVNHFFFLFAFLNPCFDPLIYGYFSL</original>
    <variation>PLHHPSFHHADLQCKNHLHPDTGPSSGPPRTTTESVQEQYTKSTAEDSKNDGCICHFIYCLLDSLLCPRNLVLV</variation>
    <location>
        <begin position="176"/>
        <end position="328"/>
    </location>
</feature>
<feature type="sequence variant" id="VAR_019311" description="In HH7; is able to bind GnRH but with a reduced affinity in vitro; dbSNP:rs104893843." evidence="8">
    <original>N</original>
    <variation>K</variation>
    <location>
        <position position="10"/>
    </location>
</feature>
<feature type="sequence variant" id="VAR_072970" description="In HH7; dbSNP:rs774317793." evidence="12">
    <original>N</original>
    <variation>S</variation>
    <location>
        <position position="18"/>
    </location>
</feature>
<feature type="sequence variant" id="VAR_072971" description="In HH7; dbSNP:rs886907903." evidence="12">
    <original>I</original>
    <variation>S</variation>
    <location>
        <position position="37"/>
    </location>
</feature>
<feature type="sequence variant" id="VAR_069960" description="In HH7; the patient also carries a mutation in FGFR1; dbSNP:rs1391808526." evidence="11">
    <original>L</original>
    <variation>V</variation>
    <location>
        <position position="83"/>
    </location>
</feature>
<feature type="sequence variant" id="VAR_072972" description="In HH7." evidence="12">
    <original>E</original>
    <variation>D</variation>
    <location>
        <position position="90"/>
    </location>
</feature>
<feature type="sequence variant" id="VAR_019312" description="In HH7; virtual abolition of GnRH agonist binding and agonist-stimulated phosphoinositide turnover; impairs GnRHR-effector coupling; dbSNP:rs104893844." evidence="6 9">
    <original>E</original>
    <variation>K</variation>
    <location>
        <position position="90"/>
    </location>
</feature>
<feature type="sequence variant" id="VAR_019313" description="In HH7; some patients also carry mutations in FGFR1; decreases but does not eliminate GnRH binding; dbSNP:rs104893836." evidence="3 7 8 11 12 13">
    <original>Q</original>
    <variation>R</variation>
    <location>
        <position position="106"/>
    </location>
</feature>
<feature type="sequence variant" id="VAR_019314" description="In HH7; complete loss of function; dbSNP:rs104893838." evidence="4 12">
    <original>A</original>
    <variation>D</variation>
    <location>
        <position position="129"/>
    </location>
</feature>
<feature type="sequence variant" id="VAR_019315" description="In HH7; completely eliminates detectable GnRH-binding activity and prevents GnRH-induced stimulation of inositol phosphate accumulation in vitro; dbSNP:rs104893842." evidence="8 12">
    <original>R</original>
    <variation>H</variation>
    <location>
        <position position="139"/>
    </location>
</feature>
<feature type="sequence variant" id="VAR_072973" description="In HH7; dbSNP:rs144900788." evidence="12">
    <original>P</original>
    <variation>S</variation>
    <location>
        <position position="146"/>
    </location>
</feature>
<feature type="sequence variant" id="VAR_019316" description="In HH7; complete loss of the receptor-mediated signaling response; dbSNP:rs104893840." evidence="5">
    <original>S</original>
    <variation>R</variation>
    <location>
        <position position="168"/>
    </location>
</feature>
<feature type="sequence variant" id="VAR_019317" description="In HH7; complete loss of ligand binding and receptor activation; specific receptor binding of radioisotope-labeled GnRH ligand is undetectable in transfected cells; dbSNP:rs74452732." evidence="10">
    <original>A</original>
    <variation>T</variation>
    <location>
        <position position="171"/>
    </location>
</feature>
<feature type="sequence variant" id="VAR_019318" description="In HH7; altered hormone binding; dbSNP:rs104893839." evidence="3">
    <original>S</original>
    <variation>R</variation>
    <location>
        <position position="217"/>
    </location>
</feature>
<feature type="sequence variant" id="VAR_019319" description="In HH7; uncertain significance; some patients also carry mutations in FGFR1; minimal effects upon receptor affinity but expression decreased; altered activation of phospholipase C; dbSNP:rs104893837." evidence="3 4 11 12 13 14">
    <original>R</original>
    <variation>Q</variation>
    <location>
        <position position="262"/>
    </location>
</feature>
<feature type="sequence variant" id="VAR_072974" description="In HH7; uncertain significance; dbSNP:rs148499544." evidence="12">
    <original>L</original>
    <variation>R</variation>
    <location>
        <position position="266"/>
    </location>
</feature>
<feature type="sequence variant" id="VAR_019320" description="In HH7; minimal effects upon receptor affinity but receptor expression decreased; dbSNP:rs28933074." evidence="14">
    <original>Y</original>
    <variation>C</variation>
    <location>
        <position position="284"/>
    </location>
</feature>
<feature type="sequence conflict" description="In Ref. 8; CAB17082." evidence="16" ref="8">
    <original>H</original>
    <variation>T</variation>
    <location>
        <position position="247"/>
    </location>
</feature>
<feature type="strand" evidence="17">
    <location>
        <begin position="28"/>
        <end position="30"/>
    </location>
</feature>
<feature type="helix" evidence="17">
    <location>
        <begin position="33"/>
        <end position="62"/>
    </location>
</feature>
<feature type="helix" evidence="17">
    <location>
        <begin position="75"/>
        <end position="99"/>
    </location>
</feature>
<feature type="strand" evidence="17">
    <location>
        <begin position="104"/>
        <end position="106"/>
    </location>
</feature>
<feature type="helix" evidence="17">
    <location>
        <begin position="111"/>
        <end position="141"/>
    </location>
</feature>
<feature type="helix" evidence="17">
    <location>
        <begin position="155"/>
        <end position="170"/>
    </location>
</feature>
<feature type="helix" evidence="17">
    <location>
        <begin position="173"/>
        <end position="177"/>
    </location>
</feature>
<feature type="strand" evidence="17">
    <location>
        <begin position="179"/>
        <end position="181"/>
    </location>
</feature>
<feature type="strand" evidence="17">
    <location>
        <begin position="195"/>
        <end position="197"/>
    </location>
</feature>
<feature type="turn" evidence="17">
    <location>
        <begin position="199"/>
        <end position="201"/>
    </location>
</feature>
<feature type="helix" evidence="17">
    <location>
        <begin position="205"/>
        <end position="217"/>
    </location>
</feature>
<feature type="turn" evidence="17">
    <location>
        <begin position="218"/>
        <end position="220"/>
    </location>
</feature>
<feature type="helix" evidence="17">
    <location>
        <begin position="221"/>
        <end position="241"/>
    </location>
</feature>
<feature type="helix" evidence="17">
    <location>
        <begin position="260"/>
        <end position="292"/>
    </location>
</feature>
<feature type="helix" evidence="17">
    <location>
        <begin position="294"/>
        <end position="299"/>
    </location>
</feature>
<feature type="helix" evidence="17">
    <location>
        <begin position="302"/>
        <end position="325"/>
    </location>
</feature>
<protein>
    <recommendedName>
        <fullName>Gonadotropin-releasing hormone receptor</fullName>
        <shortName>GnRH receptor</shortName>
        <shortName>GnRH-R</shortName>
    </recommendedName>
</protein>
<evidence type="ECO:0000255" key="1"/>
<evidence type="ECO:0000255" key="2">
    <source>
        <dbReference type="PROSITE-ProRule" id="PRU00521"/>
    </source>
</evidence>
<evidence type="ECO:0000269" key="3">
    <source>
    </source>
</evidence>
<evidence type="ECO:0000269" key="4">
    <source>
    </source>
</evidence>
<evidence type="ECO:0000269" key="5">
    <source>
    </source>
</evidence>
<evidence type="ECO:0000269" key="6">
    <source>
    </source>
</evidence>
<evidence type="ECO:0000269" key="7">
    <source>
    </source>
</evidence>
<evidence type="ECO:0000269" key="8">
    <source>
    </source>
</evidence>
<evidence type="ECO:0000269" key="9">
    <source>
    </source>
</evidence>
<evidence type="ECO:0000269" key="10">
    <source>
    </source>
</evidence>
<evidence type="ECO:0000269" key="11">
    <source>
    </source>
</evidence>
<evidence type="ECO:0000269" key="12">
    <source>
    </source>
</evidence>
<evidence type="ECO:0000269" key="13">
    <source>
    </source>
</evidence>
<evidence type="ECO:0000269" key="14">
    <source>
    </source>
</evidence>
<evidence type="ECO:0000303" key="15">
    <source>
    </source>
</evidence>
<evidence type="ECO:0000305" key="16"/>
<evidence type="ECO:0007829" key="17">
    <source>
        <dbReference type="PDB" id="7BR3"/>
    </source>
</evidence>
<organism>
    <name type="scientific">Homo sapiens</name>
    <name type="common">Human</name>
    <dbReference type="NCBI Taxonomy" id="9606"/>
    <lineage>
        <taxon>Eukaryota</taxon>
        <taxon>Metazoa</taxon>
        <taxon>Chordata</taxon>
        <taxon>Craniata</taxon>
        <taxon>Vertebrata</taxon>
        <taxon>Euteleostomi</taxon>
        <taxon>Mammalia</taxon>
        <taxon>Eutheria</taxon>
        <taxon>Euarchontoglires</taxon>
        <taxon>Primates</taxon>
        <taxon>Haplorrhini</taxon>
        <taxon>Catarrhini</taxon>
        <taxon>Hominidae</taxon>
        <taxon>Homo</taxon>
    </lineage>
</organism>
<gene>
    <name type="primary">GNRHR</name>
    <name type="synonym">GRHR</name>
</gene>
<keyword id="KW-0002">3D-structure</keyword>
<keyword id="KW-0025">Alternative splicing</keyword>
<keyword id="KW-1003">Cell membrane</keyword>
<keyword id="KW-0225">Disease variant</keyword>
<keyword id="KW-1015">Disulfide bond</keyword>
<keyword id="KW-0297">G-protein coupled receptor</keyword>
<keyword id="KW-0325">Glycoprotein</keyword>
<keyword id="KW-1016">Hypogonadotropic hypogonadism</keyword>
<keyword id="KW-0472">Membrane</keyword>
<keyword id="KW-0675">Receptor</keyword>
<keyword id="KW-1185">Reference proteome</keyword>
<keyword id="KW-0807">Transducer</keyword>
<keyword id="KW-0812">Transmembrane</keyword>
<keyword id="KW-1133">Transmembrane helix</keyword>